<gene>
    <name evidence="8" type="primary">GRE3</name>
    <name evidence="16" type="ordered locus">YHR104W</name>
</gene>
<evidence type="ECO:0000250" key="1"/>
<evidence type="ECO:0000269" key="2">
    <source>
    </source>
</evidence>
<evidence type="ECO:0000269" key="3">
    <source>
    </source>
</evidence>
<evidence type="ECO:0000269" key="4">
    <source>
    </source>
</evidence>
<evidence type="ECO:0000269" key="5">
    <source>
    </source>
</evidence>
<evidence type="ECO:0000269" key="6">
    <source>
    </source>
</evidence>
<evidence type="ECO:0000269" key="7">
    <source>
    </source>
</evidence>
<evidence type="ECO:0000303" key="8">
    <source>
    </source>
</evidence>
<evidence type="ECO:0000303" key="9">
    <source>
    </source>
</evidence>
<evidence type="ECO:0000303" key="10">
    <source>
    </source>
</evidence>
<evidence type="ECO:0000305" key="11"/>
<evidence type="ECO:0000305" key="12">
    <source>
    </source>
</evidence>
<evidence type="ECO:0000305" key="13">
    <source>
    </source>
</evidence>
<evidence type="ECO:0000305" key="14">
    <source>
    </source>
</evidence>
<evidence type="ECO:0000305" key="15">
    <source>
    </source>
</evidence>
<evidence type="ECO:0000312" key="16">
    <source>
        <dbReference type="SGD" id="S000001146"/>
    </source>
</evidence>
<protein>
    <recommendedName>
        <fullName evidence="13">NADPH-dependent aldose reductase GRE3</fullName>
        <shortName evidence="9">AR</shortName>
        <ecNumber evidence="7">1.1.1.21</ecNumber>
    </recommendedName>
    <alternativeName>
        <fullName evidence="12">Genes de respuesta a estres protein 3</fullName>
    </alternativeName>
    <alternativeName>
        <fullName evidence="14">NADPH-dependent aldo-keto reductase GRE3</fullName>
    </alternativeName>
    <alternativeName>
        <fullName evidence="10">Xylose reductase</fullName>
        <ecNumber>1.1.1.-</ecNumber>
    </alternativeName>
</protein>
<organism>
    <name type="scientific">Saccharomyces cerevisiae (strain ATCC 204508 / S288c)</name>
    <name type="common">Baker's yeast</name>
    <dbReference type="NCBI Taxonomy" id="559292"/>
    <lineage>
        <taxon>Eukaryota</taxon>
        <taxon>Fungi</taxon>
        <taxon>Dikarya</taxon>
        <taxon>Ascomycota</taxon>
        <taxon>Saccharomycotina</taxon>
        <taxon>Saccharomycetes</taxon>
        <taxon>Saccharomycetales</taxon>
        <taxon>Saccharomycetaceae</taxon>
        <taxon>Saccharomyces</taxon>
    </lineage>
</organism>
<comment type="function">
    <text evidence="3 4 7 15">Aldose reductase with a broad substrate specificity. Reduces the cytotoxic compound methylglyoxal (MG) to acetol and (R)-lactaldehyde under stress conditions. MG is synthesized via a bypath of glycolysis from dihydroxyacetone phosphate and is believed to play a role in cell cycle regulation and stress adaptation (PubMed:11525399). In pentose-fermenting yeasts, aldose reductase catalyzes the reduction of xylose into xylitol. The purified enzyme catalyzes this reaction, but the inability of S.cerevisiae to grow on xylose as sole carbon source indicates that the physiological function is more likely methylglyoxal reduction (Probable) (PubMed:11722921).</text>
</comment>
<comment type="catalytic activity">
    <reaction evidence="2 7">
        <text>an alditol + NAD(+) = an aldose + NADH + H(+)</text>
        <dbReference type="Rhea" id="RHEA:12785"/>
        <dbReference type="Rhea" id="RHEA-COMP:9554"/>
        <dbReference type="Rhea" id="RHEA-COMP:9555"/>
        <dbReference type="ChEBI" id="CHEBI:15378"/>
        <dbReference type="ChEBI" id="CHEBI:15693"/>
        <dbReference type="ChEBI" id="CHEBI:17522"/>
        <dbReference type="ChEBI" id="CHEBI:57540"/>
        <dbReference type="ChEBI" id="CHEBI:57945"/>
        <dbReference type="EC" id="1.1.1.21"/>
    </reaction>
</comment>
<comment type="catalytic activity">
    <reaction evidence="2 7">
        <text>an alditol + NADP(+) = an aldose + NADPH + H(+)</text>
        <dbReference type="Rhea" id="RHEA:12789"/>
        <dbReference type="Rhea" id="RHEA-COMP:9554"/>
        <dbReference type="Rhea" id="RHEA-COMP:9555"/>
        <dbReference type="ChEBI" id="CHEBI:15378"/>
        <dbReference type="ChEBI" id="CHEBI:15693"/>
        <dbReference type="ChEBI" id="CHEBI:17522"/>
        <dbReference type="ChEBI" id="CHEBI:57783"/>
        <dbReference type="ChEBI" id="CHEBI:58349"/>
        <dbReference type="EC" id="1.1.1.21"/>
    </reaction>
</comment>
<comment type="biophysicochemical properties">
    <kinetics>
        <KM evidence="7">0.046 mM for p-nitrobenzaldehyde</KM>
        <KM evidence="7">1.44 mM for D-L-glyceraldehyde</KM>
        <KM evidence="7">1.57 mM for D-glyceraldehyde</KM>
        <KM evidence="7">6.38 mM for L-glyceraldehyde</KM>
        <KM evidence="7">27.9 mM for D-xylose</KM>
        <KM evidence="7">32.63 mM for L-arabinose</KM>
        <KM evidence="7">9.34 mM for D-glucose</KM>
        <KM evidence="7">0.013 mM for NADPH</KM>
    </kinetics>
    <phDependence>
        <text evidence="7">Optimum pH is 5.</text>
    </phDependence>
</comment>
<comment type="subunit">
    <text evidence="7">Monomer.</text>
</comment>
<comment type="subcellular location">
    <subcellularLocation>
        <location evidence="5">Cytoplasm</location>
    </subcellularLocation>
    <subcellularLocation>
        <location evidence="5">Nucleus</location>
    </subcellularLocation>
</comment>
<comment type="induction">
    <text evidence="2 3">By osmotic, ionic, oxidative and heat stress.</text>
</comment>
<comment type="miscellaneous">
    <text evidence="6">Present with 12851 molecules/cell in log phase SD medium.</text>
</comment>
<comment type="miscellaneous">
    <text evidence="12">'De respuesta a estres' means stress response in Spanish.</text>
</comment>
<comment type="similarity">
    <text evidence="11">Belongs to the aldo/keto reductase family.</text>
</comment>
<sequence length="327" mass="37119">MSSLVTLNNGLKMPLVGLGCWKIDKKVCANQIYEAIKLGYRLFDGACDYGNEKEVGEGIRKAISEGLVSRKDIFVVSKLWNNFHHPDHVKLALKKTLSDMGLDYLDLYYIHFPIAFKYVPFEEKYPPGFYTGADDEKKGHITEAHVPIIDTYRALEECVDEGLIKSIGVSNFQGSLIQDLLRGCRIKPVALQIEHHPYLTQEHLVEFCKLHDIQVVAYSSFGPQSFIEMDLQLAKTTPTLFENDVIKKVSQNHPGSTTSQVLLRWATQRGIAVIPKSSKKERLLGNLEIEKKFTLTEQELKDISALNANIRFNDPWTWLDGKFPTFA</sequence>
<keyword id="KW-0963">Cytoplasm</keyword>
<keyword id="KW-0903">Direct protein sequencing</keyword>
<keyword id="KW-0521">NADP</keyword>
<keyword id="KW-0539">Nucleus</keyword>
<keyword id="KW-0560">Oxidoreductase</keyword>
<keyword id="KW-1185">Reference proteome</keyword>
<keyword id="KW-0346">Stress response</keyword>
<accession>P38715</accession>
<accession>D3DL54</accession>
<name>GRE3_YEAST</name>
<proteinExistence type="evidence at protein level"/>
<dbReference type="EC" id="1.1.1.21" evidence="7"/>
<dbReference type="EC" id="1.1.1.-"/>
<dbReference type="EMBL" id="U00059">
    <property type="protein sequence ID" value="AAB68858.1"/>
    <property type="molecule type" value="Genomic_DNA"/>
</dbReference>
<dbReference type="EMBL" id="BK006934">
    <property type="protein sequence ID" value="DAA06798.1"/>
    <property type="molecule type" value="Genomic_DNA"/>
</dbReference>
<dbReference type="PIR" id="S48946">
    <property type="entry name" value="S48946"/>
</dbReference>
<dbReference type="RefSeq" id="NP_011972.1">
    <property type="nucleotide sequence ID" value="NM_001179234.1"/>
</dbReference>
<dbReference type="SMR" id="P38715"/>
<dbReference type="BioGRID" id="36537">
    <property type="interactions" value="169"/>
</dbReference>
<dbReference type="FunCoup" id="P38715">
    <property type="interactions" value="551"/>
</dbReference>
<dbReference type="IntAct" id="P38715">
    <property type="interactions" value="4"/>
</dbReference>
<dbReference type="MINT" id="P38715"/>
<dbReference type="STRING" id="4932.YHR104W"/>
<dbReference type="iPTMnet" id="P38715"/>
<dbReference type="PaxDb" id="4932-YHR104W"/>
<dbReference type="PeptideAtlas" id="P38715"/>
<dbReference type="EnsemblFungi" id="YHR104W_mRNA">
    <property type="protein sequence ID" value="YHR104W"/>
    <property type="gene ID" value="YHR104W"/>
</dbReference>
<dbReference type="GeneID" id="856504"/>
<dbReference type="KEGG" id="sce:YHR104W"/>
<dbReference type="AGR" id="SGD:S000001146"/>
<dbReference type="SGD" id="S000001146">
    <property type="gene designation" value="GRE3"/>
</dbReference>
<dbReference type="VEuPathDB" id="FungiDB:YHR104W"/>
<dbReference type="eggNOG" id="KOG1577">
    <property type="taxonomic scope" value="Eukaryota"/>
</dbReference>
<dbReference type="HOGENOM" id="CLU_023205_0_0_1"/>
<dbReference type="InParanoid" id="P38715"/>
<dbReference type="OMA" id="VHWPSEG"/>
<dbReference type="OrthoDB" id="416253at2759"/>
<dbReference type="BioCyc" id="YEAST:YHR104W-MONOMER"/>
<dbReference type="BRENDA" id="1.1.1.283">
    <property type="organism ID" value="984"/>
</dbReference>
<dbReference type="BRENDA" id="1.1.1.307">
    <property type="organism ID" value="984"/>
</dbReference>
<dbReference type="BioGRID-ORCS" id="856504">
    <property type="hits" value="5 hits in 10 CRISPR screens"/>
</dbReference>
<dbReference type="CD-CODE" id="E03F929F">
    <property type="entry name" value="Stress granule"/>
</dbReference>
<dbReference type="PRO" id="PR:P38715"/>
<dbReference type="Proteomes" id="UP000002311">
    <property type="component" value="Chromosome VIII"/>
</dbReference>
<dbReference type="RNAct" id="P38715">
    <property type="molecule type" value="protein"/>
</dbReference>
<dbReference type="GO" id="GO:0005737">
    <property type="term" value="C:cytoplasm"/>
    <property type="evidence" value="ECO:0007005"/>
    <property type="project" value="SGD"/>
</dbReference>
<dbReference type="GO" id="GO:0005829">
    <property type="term" value="C:cytosol"/>
    <property type="evidence" value="ECO:0000318"/>
    <property type="project" value="GO_Central"/>
</dbReference>
<dbReference type="GO" id="GO:0005634">
    <property type="term" value="C:nucleus"/>
    <property type="evidence" value="ECO:0007005"/>
    <property type="project" value="SGD"/>
</dbReference>
<dbReference type="GO" id="GO:0004032">
    <property type="term" value="F:aldose reductase (NADPH) activity"/>
    <property type="evidence" value="ECO:0000314"/>
    <property type="project" value="SGD"/>
</dbReference>
<dbReference type="GO" id="GO:0032866">
    <property type="term" value="F:D-xylose reductase (NADPH) activity"/>
    <property type="evidence" value="ECO:0000314"/>
    <property type="project" value="SGD"/>
</dbReference>
<dbReference type="GO" id="GO:0003729">
    <property type="term" value="F:mRNA binding"/>
    <property type="evidence" value="ECO:0000314"/>
    <property type="project" value="SGD"/>
</dbReference>
<dbReference type="GO" id="GO:0019568">
    <property type="term" value="P:arabinose catabolic process"/>
    <property type="evidence" value="ECO:0000314"/>
    <property type="project" value="SGD"/>
</dbReference>
<dbReference type="GO" id="GO:0071470">
    <property type="term" value="P:cellular response to osmotic stress"/>
    <property type="evidence" value="ECO:0000314"/>
    <property type="project" value="SGD"/>
</dbReference>
<dbReference type="GO" id="GO:0034599">
    <property type="term" value="P:cellular response to oxidative stress"/>
    <property type="evidence" value="ECO:0000316"/>
    <property type="project" value="SGD"/>
</dbReference>
<dbReference type="GO" id="GO:0042843">
    <property type="term" value="P:D-xylose catabolic process"/>
    <property type="evidence" value="ECO:0000314"/>
    <property type="project" value="SGD"/>
</dbReference>
<dbReference type="GO" id="GO:0019388">
    <property type="term" value="P:galactose catabolic process"/>
    <property type="evidence" value="ECO:0000316"/>
    <property type="project" value="SGD"/>
</dbReference>
<dbReference type="FunFam" id="3.20.20.100:FF:000007">
    <property type="entry name" value="NAD(P)H-dependent D-xylose reductase xyl1"/>
    <property type="match status" value="1"/>
</dbReference>
<dbReference type="Gene3D" id="3.20.20.100">
    <property type="entry name" value="NADP-dependent oxidoreductase domain"/>
    <property type="match status" value="1"/>
</dbReference>
<dbReference type="InterPro" id="IPR020471">
    <property type="entry name" value="AKR"/>
</dbReference>
<dbReference type="InterPro" id="IPR018170">
    <property type="entry name" value="Aldo/ket_reductase_CS"/>
</dbReference>
<dbReference type="InterPro" id="IPR023210">
    <property type="entry name" value="NADP_OxRdtase_dom"/>
</dbReference>
<dbReference type="InterPro" id="IPR036812">
    <property type="entry name" value="NADP_OxRdtase_dom_sf"/>
</dbReference>
<dbReference type="PANTHER" id="PTHR11732">
    <property type="entry name" value="ALDO/KETO REDUCTASE"/>
    <property type="match status" value="1"/>
</dbReference>
<dbReference type="Pfam" id="PF00248">
    <property type="entry name" value="Aldo_ket_red"/>
    <property type="match status" value="1"/>
</dbReference>
<dbReference type="PIRSF" id="PIRSF000097">
    <property type="entry name" value="AKR"/>
    <property type="match status" value="1"/>
</dbReference>
<dbReference type="PRINTS" id="PR00069">
    <property type="entry name" value="ALDKETRDTASE"/>
</dbReference>
<dbReference type="SUPFAM" id="SSF51430">
    <property type="entry name" value="NAD(P)-linked oxidoreductase"/>
    <property type="match status" value="1"/>
</dbReference>
<dbReference type="PROSITE" id="PS00798">
    <property type="entry name" value="ALDOKETO_REDUCTASE_1"/>
    <property type="match status" value="1"/>
</dbReference>
<dbReference type="PROSITE" id="PS00062">
    <property type="entry name" value="ALDOKETO_REDUCTASE_2"/>
    <property type="match status" value="1"/>
</dbReference>
<dbReference type="PROSITE" id="PS00063">
    <property type="entry name" value="ALDOKETO_REDUCTASE_3"/>
    <property type="match status" value="1"/>
</dbReference>
<feature type="initiator methionine" description="Removed" evidence="7">
    <location>
        <position position="1"/>
    </location>
</feature>
<feature type="chain" id="PRO_0000124678" description="NADPH-dependent aldose reductase GRE3">
    <location>
        <begin position="2"/>
        <end position="327"/>
    </location>
</feature>
<feature type="active site" description="Proton donor" evidence="1">
    <location>
        <position position="49"/>
    </location>
</feature>
<feature type="binding site" evidence="1">
    <location>
        <position position="111"/>
    </location>
    <ligand>
        <name>substrate</name>
    </ligand>
</feature>
<feature type="binding site" evidence="1">
    <location>
        <begin position="219"/>
        <end position="286"/>
    </location>
    <ligand>
        <name>NADP(+)</name>
        <dbReference type="ChEBI" id="CHEBI:58349"/>
    </ligand>
</feature>
<feature type="site" description="Lowers pKa of active site Tyr" evidence="1">
    <location>
        <position position="78"/>
    </location>
</feature>
<reference key="1">
    <citation type="journal article" date="1994" name="Science">
        <title>Complete nucleotide sequence of Saccharomyces cerevisiae chromosome VIII.</title>
        <authorList>
            <person name="Johnston M."/>
            <person name="Andrews S."/>
            <person name="Brinkman R."/>
            <person name="Cooper J."/>
            <person name="Ding H."/>
            <person name="Dover J."/>
            <person name="Du Z."/>
            <person name="Favello A."/>
            <person name="Fulton L."/>
            <person name="Gattung S."/>
            <person name="Geisel C."/>
            <person name="Kirsten J."/>
            <person name="Kucaba T."/>
            <person name="Hillier L.W."/>
            <person name="Jier M."/>
            <person name="Johnston L."/>
            <person name="Langston Y."/>
            <person name="Latreille P."/>
            <person name="Louis E.J."/>
            <person name="Macri C."/>
            <person name="Mardis E."/>
            <person name="Menezes S."/>
            <person name="Mouser L."/>
            <person name="Nhan M."/>
            <person name="Rifkin L."/>
            <person name="Riles L."/>
            <person name="St Peter H."/>
            <person name="Trevaskis E."/>
            <person name="Vaughan K."/>
            <person name="Vignati D."/>
            <person name="Wilcox L."/>
            <person name="Wohldman P."/>
            <person name="Waterston R."/>
            <person name="Wilson R."/>
            <person name="Vaudin M."/>
        </authorList>
    </citation>
    <scope>NUCLEOTIDE SEQUENCE [LARGE SCALE GENOMIC DNA]</scope>
    <source>
        <strain>ATCC 204508 / S288c</strain>
    </source>
</reference>
<reference key="2">
    <citation type="journal article" date="2014" name="G3 (Bethesda)">
        <title>The reference genome sequence of Saccharomyces cerevisiae: Then and now.</title>
        <authorList>
            <person name="Engel S.R."/>
            <person name="Dietrich F.S."/>
            <person name="Fisk D.G."/>
            <person name="Binkley G."/>
            <person name="Balakrishnan R."/>
            <person name="Costanzo M.C."/>
            <person name="Dwight S.S."/>
            <person name="Hitz B.C."/>
            <person name="Karra K."/>
            <person name="Nash R.S."/>
            <person name="Weng S."/>
            <person name="Wong E.D."/>
            <person name="Lloyd P."/>
            <person name="Skrzypek M.S."/>
            <person name="Miyasato S.R."/>
            <person name="Simison M."/>
            <person name="Cherry J.M."/>
        </authorList>
    </citation>
    <scope>GENOME REANNOTATION</scope>
    <source>
        <strain>ATCC 204508 / S288c</strain>
    </source>
</reference>
<reference key="3">
    <citation type="journal article" date="1995" name="Appl. Environ. Microbiol.">
        <title>Purification and partial characterization of an aldo-keto reductase from Saccharomyces cerevisiae.</title>
        <authorList>
            <person name="Kuhn A."/>
            <person name="van Zyl C."/>
            <person name="van Tonder A."/>
            <person name="Prior B.A."/>
        </authorList>
    </citation>
    <scope>PROTEIN SEQUENCE OF 2-14</scope>
    <scope>CATALYTIC ACTIVITY</scope>
    <scope>SUBUNIT</scope>
    <scope>BIOPHYSICOCHEMICAL PROPERTIES</scope>
    <source>
        <strain>ATCC 26602</strain>
    </source>
</reference>
<reference key="4">
    <citation type="journal article" date="1999" name="Yeast">
        <title>Three genes whose expression is induced by stress in Saccharomyces cerevisiae.</title>
        <authorList>
            <person name="Garay-Arroyo A."/>
            <person name="Covarrubias A.A."/>
        </authorList>
    </citation>
    <scope>INDUCTION</scope>
</reference>
<reference key="5">
    <citation type="journal article" date="2001" name="Curr. Genet.">
        <title>The Saccharomyces cerevisiae aldose reductase is implied in the metabolism of methylglyoxal in response to stress conditions.</title>
        <authorList>
            <person name="Aguilera J."/>
            <person name="Prieto J.A."/>
        </authorList>
    </citation>
    <scope>CATALYTIC ACTIVITY</scope>
    <scope>ACTIVITY ON METHYLGLYOXAL</scope>
    <scope>INDUCTION</scope>
</reference>
<reference key="6">
    <citation type="journal article" date="2001" name="Appl. Environ. Microbiol.">
        <title>Deletion of the GRE3 aldose reductase gene and its influence on xylose metabolism in recombinant strains of Saccharomyces cerevisiae expressing the xylA and XKS1 genes.</title>
        <authorList>
            <person name="Traff K.L."/>
            <person name="Otero Cordero R.R."/>
            <person name="van Zyl W.H."/>
            <person name="Hahn-Hagerdal B."/>
        </authorList>
    </citation>
    <scope>ACTIVITY ON XYLOSE</scope>
</reference>
<reference key="7">
    <citation type="journal article" date="1998" name="Yeast">
        <title>The structure and function of yeast xylose (aldose) reductases.</title>
        <authorList>
            <person name="Lee H."/>
        </authorList>
    </citation>
    <scope>REVIEW</scope>
    <scope>XYLOSE UTILIZATION</scope>
</reference>
<reference key="8">
    <citation type="journal article" date="2003" name="Nature">
        <title>Global analysis of protein localization in budding yeast.</title>
        <authorList>
            <person name="Huh W.-K."/>
            <person name="Falvo J.V."/>
            <person name="Gerke L.C."/>
            <person name="Carroll A.S."/>
            <person name="Howson R.W."/>
            <person name="Weissman J.S."/>
            <person name="O'Shea E.K."/>
        </authorList>
    </citation>
    <scope>SUBCELLULAR LOCATION [LARGE SCALE ANALYSIS]</scope>
</reference>
<reference key="9">
    <citation type="journal article" date="2003" name="Nature">
        <title>Global analysis of protein expression in yeast.</title>
        <authorList>
            <person name="Ghaemmaghami S."/>
            <person name="Huh W.-K."/>
            <person name="Bower K."/>
            <person name="Howson R.W."/>
            <person name="Belle A."/>
            <person name="Dephoure N."/>
            <person name="O'Shea E.K."/>
            <person name="Weissman J.S."/>
        </authorList>
    </citation>
    <scope>LEVEL OF PROTEIN EXPRESSION [LARGE SCALE ANALYSIS]</scope>
</reference>